<sequence>MSGFLDAEAASFAIGGATLLDRIDLRIDRGELIAIVGPNGAGKSTLLRLLSGDLRPTRGAVSLQQRAIHSYAPRELASRRAMLSQHVNVSFPFTVEEVVWMGAGDRGRGTSQSLVDAALHEVGLDAFRDRQLPTLSGGEQQRAHFARVLVQLRCGEVEHGPGLLLLDEPTSSLDLRHQIDLAGTARRCARNGTTVIAILHDINLAARFADRIVVLHQGRLAADGAPSQVIENSLIRRVFDIALVVRTAEDGVPFLLPQMIDAARPQSEG</sequence>
<reference key="1">
    <citation type="submission" date="2006-03" db="EMBL/GenBank/DDBJ databases">
        <title>Complete sequence of Rhodopseudomonas palustris BisB18.</title>
        <authorList>
            <consortium name="US DOE Joint Genome Institute"/>
            <person name="Copeland A."/>
            <person name="Lucas S."/>
            <person name="Lapidus A."/>
            <person name="Barry K."/>
            <person name="Detter J.C."/>
            <person name="Glavina del Rio T."/>
            <person name="Hammon N."/>
            <person name="Israni S."/>
            <person name="Dalin E."/>
            <person name="Tice H."/>
            <person name="Pitluck S."/>
            <person name="Chain P."/>
            <person name="Malfatti S."/>
            <person name="Shin M."/>
            <person name="Vergez L."/>
            <person name="Schmutz J."/>
            <person name="Larimer F."/>
            <person name="Land M."/>
            <person name="Hauser L."/>
            <person name="Pelletier D.A."/>
            <person name="Kyrpides N."/>
            <person name="Anderson I."/>
            <person name="Oda Y."/>
            <person name="Harwood C.S."/>
            <person name="Richardson P."/>
        </authorList>
    </citation>
    <scope>NUCLEOTIDE SEQUENCE [LARGE SCALE GENOMIC DNA]</scope>
    <source>
        <strain>BisB18</strain>
    </source>
</reference>
<gene>
    <name evidence="1" type="primary">hmuV</name>
    <name type="ordered locus">RPC_1967</name>
</gene>
<dbReference type="EC" id="7.6.2.-" evidence="1"/>
<dbReference type="EMBL" id="CP000301">
    <property type="protein sequence ID" value="ABD87524.1"/>
    <property type="molecule type" value="Genomic_DNA"/>
</dbReference>
<dbReference type="SMR" id="Q217B2"/>
<dbReference type="STRING" id="316056.RPC_1967"/>
<dbReference type="KEGG" id="rpc:RPC_1967"/>
<dbReference type="eggNOG" id="COG4559">
    <property type="taxonomic scope" value="Bacteria"/>
</dbReference>
<dbReference type="HOGENOM" id="CLU_000604_1_11_5"/>
<dbReference type="OrthoDB" id="9810077at2"/>
<dbReference type="GO" id="GO:0005886">
    <property type="term" value="C:plasma membrane"/>
    <property type="evidence" value="ECO:0007669"/>
    <property type="project" value="UniProtKB-SubCell"/>
</dbReference>
<dbReference type="GO" id="GO:0005524">
    <property type="term" value="F:ATP binding"/>
    <property type="evidence" value="ECO:0007669"/>
    <property type="project" value="UniProtKB-KW"/>
</dbReference>
<dbReference type="GO" id="GO:0016887">
    <property type="term" value="F:ATP hydrolysis activity"/>
    <property type="evidence" value="ECO:0007669"/>
    <property type="project" value="InterPro"/>
</dbReference>
<dbReference type="CDD" id="cd03214">
    <property type="entry name" value="ABC_Iron-Siderophores_B12_Hemin"/>
    <property type="match status" value="1"/>
</dbReference>
<dbReference type="Gene3D" id="3.40.50.300">
    <property type="entry name" value="P-loop containing nucleotide triphosphate hydrolases"/>
    <property type="match status" value="1"/>
</dbReference>
<dbReference type="InterPro" id="IPR003593">
    <property type="entry name" value="AAA+_ATPase"/>
</dbReference>
<dbReference type="InterPro" id="IPR003439">
    <property type="entry name" value="ABC_transporter-like_ATP-bd"/>
</dbReference>
<dbReference type="InterPro" id="IPR027417">
    <property type="entry name" value="P-loop_NTPase"/>
</dbReference>
<dbReference type="NCBIfam" id="NF010068">
    <property type="entry name" value="PRK13548.1"/>
    <property type="match status" value="1"/>
</dbReference>
<dbReference type="PANTHER" id="PTHR42794">
    <property type="entry name" value="HEMIN IMPORT ATP-BINDING PROTEIN HMUV"/>
    <property type="match status" value="1"/>
</dbReference>
<dbReference type="PANTHER" id="PTHR42794:SF1">
    <property type="entry name" value="HEMIN IMPORT ATP-BINDING PROTEIN HMUV"/>
    <property type="match status" value="1"/>
</dbReference>
<dbReference type="Pfam" id="PF00005">
    <property type="entry name" value="ABC_tran"/>
    <property type="match status" value="1"/>
</dbReference>
<dbReference type="SMART" id="SM00382">
    <property type="entry name" value="AAA"/>
    <property type="match status" value="1"/>
</dbReference>
<dbReference type="SUPFAM" id="SSF52540">
    <property type="entry name" value="P-loop containing nucleoside triphosphate hydrolases"/>
    <property type="match status" value="1"/>
</dbReference>
<dbReference type="PROSITE" id="PS50893">
    <property type="entry name" value="ABC_TRANSPORTER_2"/>
    <property type="match status" value="1"/>
</dbReference>
<dbReference type="PROSITE" id="PS51261">
    <property type="entry name" value="HMUV"/>
    <property type="match status" value="1"/>
</dbReference>
<name>HMUV_RHOPB</name>
<proteinExistence type="inferred from homology"/>
<keyword id="KW-0067">ATP-binding</keyword>
<keyword id="KW-0997">Cell inner membrane</keyword>
<keyword id="KW-1003">Cell membrane</keyword>
<keyword id="KW-0472">Membrane</keyword>
<keyword id="KW-0547">Nucleotide-binding</keyword>
<keyword id="KW-1278">Translocase</keyword>
<keyword id="KW-0813">Transport</keyword>
<organism>
    <name type="scientific">Rhodopseudomonas palustris (strain BisB18)</name>
    <dbReference type="NCBI Taxonomy" id="316056"/>
    <lineage>
        <taxon>Bacteria</taxon>
        <taxon>Pseudomonadati</taxon>
        <taxon>Pseudomonadota</taxon>
        <taxon>Alphaproteobacteria</taxon>
        <taxon>Hyphomicrobiales</taxon>
        <taxon>Nitrobacteraceae</taxon>
        <taxon>Rhodopseudomonas</taxon>
    </lineage>
</organism>
<protein>
    <recommendedName>
        <fullName evidence="1">Hemin import ATP-binding protein HmuV</fullName>
        <ecNumber evidence="1">7.6.2.-</ecNumber>
    </recommendedName>
</protein>
<accession>Q217B2</accession>
<evidence type="ECO:0000255" key="1">
    <source>
        <dbReference type="HAMAP-Rule" id="MF_01718"/>
    </source>
</evidence>
<comment type="function">
    <text evidence="1">Part of the ABC transporter complex HmuTUV involved in hemin import. Responsible for energy coupling to the transport system.</text>
</comment>
<comment type="subunit">
    <text evidence="1">The complex is composed of two ATP-binding proteins (HmuV), two transmembrane proteins (HmuU) and a solute-binding protein (HmuT).</text>
</comment>
<comment type="subcellular location">
    <subcellularLocation>
        <location evidence="1">Cell inner membrane</location>
        <topology evidence="1">Peripheral membrane protein</topology>
    </subcellularLocation>
</comment>
<comment type="similarity">
    <text evidence="1">Belongs to the ABC transporter superfamily. Heme (hemin) importer (TC 3.A.1.14.5) family.</text>
</comment>
<feature type="chain" id="PRO_0000269622" description="Hemin import ATP-binding protein HmuV">
    <location>
        <begin position="1"/>
        <end position="269"/>
    </location>
</feature>
<feature type="domain" description="ABC transporter" evidence="1">
    <location>
        <begin position="5"/>
        <end position="242"/>
    </location>
</feature>
<feature type="binding site" evidence="1">
    <location>
        <begin position="37"/>
        <end position="44"/>
    </location>
    <ligand>
        <name>ATP</name>
        <dbReference type="ChEBI" id="CHEBI:30616"/>
    </ligand>
</feature>